<gene>
    <name evidence="7" type="primary">CPS3</name>
</gene>
<reference key="1">
    <citation type="journal article" date="2019" name="Phytochemistry">
        <title>Diterpene synthases facilitating production of the kaurane skeleton of eriocalyxin B in the medicinal plant Isodon eriocalyx.</title>
        <authorList>
            <person name="Du G."/>
            <person name="Gong H.-Y."/>
            <person name="Feng K.-N."/>
            <person name="Chen Q.-Q."/>
            <person name="Yang Y.-L."/>
            <person name="Fu X.-L."/>
            <person name="Lu S."/>
            <person name="Zeng Y."/>
        </authorList>
    </citation>
    <scope>NUCLEOTIDE SEQUENCE [MRNA]</scope>
    <scope>FUNCTION</scope>
    <scope>CATALYTIC ACTIVITY</scope>
    <scope>PATHWAY</scope>
    <scope>TISSUE SPECIFICITY</scope>
    <scope>DEVELOPMENTAL STAGE</scope>
</reference>
<protein>
    <recommendedName>
        <fullName evidence="7">Ent-copalyl diphosphate synthase 3</fullName>
        <shortName evidence="7">IeCPS3</shortName>
        <ecNumber evidence="6">5.5.1.13</ecNumber>
    </recommendedName>
</protein>
<dbReference type="EC" id="5.5.1.13" evidence="6"/>
<dbReference type="EMBL" id="KY937955">
    <property type="protein sequence ID" value="AWN06649.1"/>
    <property type="molecule type" value="mRNA"/>
</dbReference>
<dbReference type="SMR" id="A0A3G1QTU5"/>
<dbReference type="UniPathway" id="UPA00213"/>
<dbReference type="UniPathway" id="UPA00390"/>
<dbReference type="GO" id="GO:0009507">
    <property type="term" value="C:chloroplast"/>
    <property type="evidence" value="ECO:0007669"/>
    <property type="project" value="UniProtKB-SubCell"/>
</dbReference>
<dbReference type="GO" id="GO:0009905">
    <property type="term" value="F:ent-copalyl diphosphate synthase activity"/>
    <property type="evidence" value="ECO:0000314"/>
    <property type="project" value="UniProtKB"/>
</dbReference>
<dbReference type="GO" id="GO:0000287">
    <property type="term" value="F:magnesium ion binding"/>
    <property type="evidence" value="ECO:0007669"/>
    <property type="project" value="TreeGrafter"/>
</dbReference>
<dbReference type="GO" id="GO:0010333">
    <property type="term" value="F:terpene synthase activity"/>
    <property type="evidence" value="ECO:0007669"/>
    <property type="project" value="InterPro"/>
</dbReference>
<dbReference type="GO" id="GO:0009686">
    <property type="term" value="P:gibberellin biosynthetic process"/>
    <property type="evidence" value="ECO:0007669"/>
    <property type="project" value="UniProtKB-UniPathway"/>
</dbReference>
<dbReference type="GO" id="GO:1901946">
    <property type="term" value="P:miltiradiene biosynthetic process"/>
    <property type="evidence" value="ECO:0000314"/>
    <property type="project" value="UniProtKB"/>
</dbReference>
<dbReference type="GO" id="GO:0016114">
    <property type="term" value="P:terpenoid biosynthetic process"/>
    <property type="evidence" value="ECO:0000314"/>
    <property type="project" value="UniProtKB"/>
</dbReference>
<dbReference type="FunFam" id="1.50.10.130:FF:000002">
    <property type="entry name" value="Ent-copalyl diphosphate synthase, chloroplastic"/>
    <property type="match status" value="1"/>
</dbReference>
<dbReference type="Gene3D" id="1.50.10.160">
    <property type="match status" value="1"/>
</dbReference>
<dbReference type="Gene3D" id="1.10.600.10">
    <property type="entry name" value="Farnesyl Diphosphate Synthase"/>
    <property type="match status" value="1"/>
</dbReference>
<dbReference type="Gene3D" id="1.50.10.130">
    <property type="entry name" value="Terpene synthase, N-terminal domain"/>
    <property type="match status" value="1"/>
</dbReference>
<dbReference type="InterPro" id="IPR008949">
    <property type="entry name" value="Isoprenoid_synthase_dom_sf"/>
</dbReference>
<dbReference type="InterPro" id="IPR001906">
    <property type="entry name" value="Terpene_synth_N"/>
</dbReference>
<dbReference type="InterPro" id="IPR036965">
    <property type="entry name" value="Terpene_synth_N_sf"/>
</dbReference>
<dbReference type="InterPro" id="IPR050148">
    <property type="entry name" value="Terpene_synthase-like"/>
</dbReference>
<dbReference type="InterPro" id="IPR008930">
    <property type="entry name" value="Terpenoid_cyclase/PrenylTrfase"/>
</dbReference>
<dbReference type="PANTHER" id="PTHR31739">
    <property type="entry name" value="ENT-COPALYL DIPHOSPHATE SYNTHASE, CHLOROPLASTIC"/>
    <property type="match status" value="1"/>
</dbReference>
<dbReference type="PANTHER" id="PTHR31739:SF4">
    <property type="entry name" value="ENT-COPALYL DIPHOSPHATE SYNTHASE, CHLOROPLASTIC"/>
    <property type="match status" value="1"/>
</dbReference>
<dbReference type="Pfam" id="PF01397">
    <property type="entry name" value="Terpene_synth"/>
    <property type="match status" value="1"/>
</dbReference>
<dbReference type="SFLD" id="SFLDG01014">
    <property type="entry name" value="Terpene_Cyclase_Like_1_N-term"/>
    <property type="match status" value="1"/>
</dbReference>
<dbReference type="SFLD" id="SFLDG01605">
    <property type="entry name" value="Terpene_Cyclase_Like_1_N-term"/>
    <property type="match status" value="1"/>
</dbReference>
<dbReference type="SUPFAM" id="SSF48239">
    <property type="entry name" value="Terpenoid cyclases/Protein prenyltransferases"/>
    <property type="match status" value="2"/>
</dbReference>
<dbReference type="SUPFAM" id="SSF48576">
    <property type="entry name" value="Terpenoid synthases"/>
    <property type="match status" value="1"/>
</dbReference>
<proteinExistence type="evidence at protein level"/>
<name>CPS3_ISOER</name>
<sequence>FRSTAAGRCLPVTCCVFPRHFRVSSSSILPSNAKVVGGCKKNRQIAVEAAQSLEVDSQQPMNQEEVSEKMRQLREKIRWMLQNMDDGEISVSPYDTAWVAMVEDIGGGGGPQFPTSLEWISNNQLDDGSWGDLRFLIYDRILNTLACVAVLTQWKMHLHKCQKGLRFIRENIDNLENGNDEMMPVGFEVAFPSLIQTAKKVGIKIPTDSPFMKNIYAKRDLKLRKIPMDILHTKPTTLLHSLEGMEGLDWEKLLNLRTDDGSFLMSPSSTAYVFRHTKDELCHQYLLKSVNKFNGGVPNVYPVDMFEHLWCVDRLQRLGISRYFQVEIQECLDYVYKYWTNKGICWARNTNVQDVDDTAMGFRLLRLHGYDVSTDAFKQFEKAGEFCSFPGQSTDALTGMYNLYRASQTMFNGEHILADAKEYSTNFLHKKRLANAIVDKWIITKDLPGEVGYALDVPFYASLPRLEARFFLEQYGGDDDVWIGKTLYRMLYVNCDTHLELAKLDYEKCQAVHQLEWESIQKWYRDWNLVEFGLSERSLLLAYYIAASTVFEPERSRERLAWAITAILVKTIASQRQLPLETKGESLGSILENEDGGRLIEFLINTIHQLSSEIVVAEGRDITQQLSNTWQKWLKTCKEGGDDDLGEAEARLIVHTLHLSSGLDESSFSHPKYHQLLEATSKVCGQLRLFQSRKQVDVDLATGTTFQIEAGMQELVKLVFTNSSEDLDSLTKQSFFSIARSFYYTAYCDEGAINSHIDKVLFEKID</sequence>
<feature type="transit peptide" description="Chloroplast" evidence="5">
    <location>
        <begin position="1" status="less than"/>
        <end position="30"/>
    </location>
</feature>
<feature type="chain" id="PRO_0000452380" description="Ent-copalyl diphosphate synthase 3">
    <location>
        <begin position="31"/>
        <end position="766"/>
    </location>
</feature>
<feature type="short sequence motif" description="DXDD motif" evidence="2">
    <location>
        <begin position="354"/>
        <end position="357"/>
    </location>
</feature>
<feature type="binding site" evidence="3">
    <location>
        <position position="222"/>
    </location>
    <ligand>
        <name>substrate</name>
    </ligand>
</feature>
<feature type="binding site" evidence="1">
    <location>
        <position position="354"/>
    </location>
    <ligand>
        <name>Mg(2+)</name>
        <dbReference type="ChEBI" id="CHEBI:18420"/>
    </ligand>
</feature>
<feature type="binding site" evidence="1">
    <location>
        <position position="356"/>
    </location>
    <ligand>
        <name>Mg(2+)</name>
        <dbReference type="ChEBI" id="CHEBI:18420"/>
    </ligand>
</feature>
<feature type="binding site" evidence="3">
    <location>
        <position position="440"/>
    </location>
    <ligand>
        <name>substrate</name>
    </ligand>
</feature>
<feature type="non-terminal residue" evidence="8">
    <location>
        <position position="1"/>
    </location>
</feature>
<organism>
    <name type="scientific">Isodon eriocalyx</name>
    <name type="common">Plectranthus eriocalyx</name>
    <dbReference type="NCBI Taxonomy" id="662907"/>
    <lineage>
        <taxon>Eukaryota</taxon>
        <taxon>Viridiplantae</taxon>
        <taxon>Streptophyta</taxon>
        <taxon>Embryophyta</taxon>
        <taxon>Tracheophyta</taxon>
        <taxon>Spermatophyta</taxon>
        <taxon>Magnoliopsida</taxon>
        <taxon>eudicotyledons</taxon>
        <taxon>Gunneridae</taxon>
        <taxon>Pentapetalae</taxon>
        <taxon>asterids</taxon>
        <taxon>lamiids</taxon>
        <taxon>Lamiales</taxon>
        <taxon>Lamiaceae</taxon>
        <taxon>Nepetoideae</taxon>
        <taxon>Ocimeae</taxon>
        <taxon>Isodoninae</taxon>
        <taxon>Isodon</taxon>
    </lineage>
</organism>
<evidence type="ECO:0000250" key="1">
    <source>
        <dbReference type="UniProtKB" id="C7BKP9"/>
    </source>
</evidence>
<evidence type="ECO:0000250" key="2">
    <source>
        <dbReference type="UniProtKB" id="G3E4M4"/>
    </source>
</evidence>
<evidence type="ECO:0000250" key="3">
    <source>
        <dbReference type="UniProtKB" id="Q38802"/>
    </source>
</evidence>
<evidence type="ECO:0000250" key="4">
    <source>
        <dbReference type="UniProtKB" id="Q40577"/>
    </source>
</evidence>
<evidence type="ECO:0000255" key="5"/>
<evidence type="ECO:0000269" key="6">
    <source>
    </source>
</evidence>
<evidence type="ECO:0000303" key="7">
    <source>
    </source>
</evidence>
<evidence type="ECO:0000305" key="8"/>
<evidence type="ECO:0000305" key="9">
    <source>
    </source>
</evidence>
<accession>A0A3G1QTU5</accession>
<keyword id="KW-0150">Chloroplast</keyword>
<keyword id="KW-0413">Isomerase</keyword>
<keyword id="KW-0460">Magnesium</keyword>
<keyword id="KW-0479">Metal-binding</keyword>
<keyword id="KW-0934">Plastid</keyword>
<keyword id="KW-0809">Transit peptide</keyword>
<comment type="function">
    <text evidence="6">Involved in the biosynthesis of ent-kaurene diterpenoids natural products such as oridonin, miltiradiene, eriocalyxin B and nezukol, known to exhibit antitumor, anti-inflammatory and antibacterial activities, and in the production of gibberellins phytohormones (PubMed:30496917). Catalyzes the conversion of (2E,6E,10E)-geranylgeranyl diphosphate (GGPP) to ent-copalyl diphosphate (ent-CPP) (PubMed:30496917).</text>
</comment>
<comment type="catalytic activity">
    <reaction evidence="6">
        <text>(2E,6E,10E)-geranylgeranyl diphosphate = ent-copalyl diphosphate</text>
        <dbReference type="Rhea" id="RHEA:14841"/>
        <dbReference type="ChEBI" id="CHEBI:58553"/>
        <dbReference type="ChEBI" id="CHEBI:58756"/>
        <dbReference type="EC" id="5.5.1.13"/>
    </reaction>
    <physiologicalReaction direction="left-to-right" evidence="6">
        <dbReference type="Rhea" id="RHEA:14842"/>
    </physiologicalReaction>
</comment>
<comment type="cofactor">
    <cofactor evidence="4">
        <name>Mg(2+)</name>
        <dbReference type="ChEBI" id="CHEBI:18420"/>
    </cofactor>
</comment>
<comment type="pathway">
    <text evidence="9">Plant hormone biosynthesis; gibberellin biosynthesis.</text>
</comment>
<comment type="pathway">
    <text evidence="6">Secondary metabolite biosynthesis; terpenoid biosynthesis.</text>
</comment>
<comment type="subcellular location">
    <subcellularLocation>
        <location evidence="5">Plastid</location>
        <location evidence="5">Chloroplast</location>
    </subcellularLocation>
</comment>
<comment type="tissue specificity">
    <text evidence="6">Accumulates in leaves, and, at low levels, in germinating seeds.</text>
</comment>
<comment type="developmental stage">
    <text evidence="6">Moslty expressed in leaves where ent-kaurane diterpenoids accumulates but weakly expressed in germinating seeds in which gibberellins are produced.</text>
</comment>
<comment type="domain">
    <text evidence="8">The Asp-Xaa-Asp-Asp (DXDD) motif is important for the catalytic activity, presumably through binding to Mg(2+).</text>
</comment>
<comment type="similarity">
    <text evidence="8">Belongs to the terpene synthase family. Tpsc subfamily.</text>
</comment>